<reference key="1">
    <citation type="journal article" date="2005" name="Genome Res.">
        <title>Complete genome sequence of the hyperthermophilic archaeon Thermococcus kodakaraensis KOD1 and comparison with Pyrococcus genomes.</title>
        <authorList>
            <person name="Fukui T."/>
            <person name="Atomi H."/>
            <person name="Kanai T."/>
            <person name="Matsumi R."/>
            <person name="Fujiwara S."/>
            <person name="Imanaka T."/>
        </authorList>
    </citation>
    <scope>NUCLEOTIDE SEQUENCE [LARGE SCALE GENOMIC DNA]</scope>
    <source>
        <strain>ATCC BAA-918 / JCM 12380 / KOD1</strain>
    </source>
</reference>
<keyword id="KW-0963">Cytoplasm</keyword>
<keyword id="KW-0271">Exosome</keyword>
<keyword id="KW-1185">Reference proteome</keyword>
<keyword id="KW-0694">RNA-binding</keyword>
<sequence>MKKIFVKPRELVVPGTLLAQGPFKNGRGTFREGNAIYSTVIGLVEIRGNVIRVIPLEGPYIPEVGDNVLGKIVDVKFSSWTVDIGAPYQASLRVQDAVEERIDLLKTDLRKIFDIGDIIYAKVKAFNEVNQIDLTTKGMPFKGGPLRGGQLVTITPSKVPRLIGKGGSMINMIKTLTGTRIIVGQNGWVWVSGKNDELERLAIEAILKVDRESHTQGLTDRVKEFLLSRLRELKEQGVIEEIPEVNGEEGGEDDGQA</sequence>
<evidence type="ECO:0000255" key="1">
    <source>
        <dbReference type="HAMAP-Rule" id="MF_00623"/>
    </source>
</evidence>
<name>RRP4_THEKO</name>
<feature type="chain" id="PRO_0000050154" description="Exosome complex component Rrp4">
    <location>
        <begin position="1"/>
        <end position="257"/>
    </location>
</feature>
<feature type="domain" description="S1 motif" evidence="1">
    <location>
        <begin position="65"/>
        <end position="137"/>
    </location>
</feature>
<feature type="domain" description="KH" evidence="1">
    <location>
        <begin position="147"/>
        <end position="206"/>
    </location>
</feature>
<comment type="function">
    <text evidence="1">Non-catalytic component of the exosome, which is a complex involved in RNA degradation. Increases the RNA binding and the efficiency of RNA degradation. Confers strong poly(A) specificity to the exosome.</text>
</comment>
<comment type="subunit">
    <text evidence="1">Component of the archaeal exosome complex. Forms a trimer of Rrp4 and/or Csl4 subunits. The trimer associates with a hexameric ring-like arrangement composed of 3 Rrp41-Rrp42 heterodimers.</text>
</comment>
<comment type="subcellular location">
    <subcellularLocation>
        <location evidence="1">Cytoplasm</location>
    </subcellularLocation>
</comment>
<comment type="similarity">
    <text evidence="1">Belongs to the RRP4 family.</text>
</comment>
<gene>
    <name evidence="1" type="primary">rrp4</name>
    <name type="ordered locus">TK1635</name>
</gene>
<protein>
    <recommendedName>
        <fullName evidence="1">Exosome complex component Rrp4</fullName>
    </recommendedName>
</protein>
<accession>Q5JIR5</accession>
<dbReference type="EMBL" id="AP006878">
    <property type="protein sequence ID" value="BAD85824.1"/>
    <property type="molecule type" value="Genomic_DNA"/>
</dbReference>
<dbReference type="RefSeq" id="WP_011250586.1">
    <property type="nucleotide sequence ID" value="NC_006624.1"/>
</dbReference>
<dbReference type="SMR" id="Q5JIR5"/>
<dbReference type="STRING" id="69014.TK1635"/>
<dbReference type="EnsemblBacteria" id="BAD85824">
    <property type="protein sequence ID" value="BAD85824"/>
    <property type="gene ID" value="TK1635"/>
</dbReference>
<dbReference type="GeneID" id="78448163"/>
<dbReference type="KEGG" id="tko:TK1635"/>
<dbReference type="PATRIC" id="fig|69014.16.peg.1594"/>
<dbReference type="eggNOG" id="arCOG00678">
    <property type="taxonomic scope" value="Archaea"/>
</dbReference>
<dbReference type="HOGENOM" id="CLU_071769_0_0_2"/>
<dbReference type="InParanoid" id="Q5JIR5"/>
<dbReference type="OrthoDB" id="35160at2157"/>
<dbReference type="PhylomeDB" id="Q5JIR5"/>
<dbReference type="Proteomes" id="UP000000536">
    <property type="component" value="Chromosome"/>
</dbReference>
<dbReference type="GO" id="GO:0005737">
    <property type="term" value="C:cytoplasm"/>
    <property type="evidence" value="ECO:0007669"/>
    <property type="project" value="UniProtKB-SubCell"/>
</dbReference>
<dbReference type="GO" id="GO:0000178">
    <property type="term" value="C:exosome (RNase complex)"/>
    <property type="evidence" value="ECO:0000318"/>
    <property type="project" value="GO_Central"/>
</dbReference>
<dbReference type="GO" id="GO:0008143">
    <property type="term" value="F:poly(A) binding"/>
    <property type="evidence" value="ECO:0007669"/>
    <property type="project" value="InterPro"/>
</dbReference>
<dbReference type="GO" id="GO:0003723">
    <property type="term" value="F:RNA binding"/>
    <property type="evidence" value="ECO:0000318"/>
    <property type="project" value="GO_Central"/>
</dbReference>
<dbReference type="GO" id="GO:0071034">
    <property type="term" value="P:CUT catabolic process"/>
    <property type="evidence" value="ECO:0000318"/>
    <property type="project" value="GO_Central"/>
</dbReference>
<dbReference type="GO" id="GO:0000467">
    <property type="term" value="P:exonucleolytic trimming to generate mature 3'-end of 5.8S rRNA from tricistronic rRNA transcript (SSU-rRNA, 5.8S rRNA, LSU-rRNA)"/>
    <property type="evidence" value="ECO:0000318"/>
    <property type="project" value="GO_Central"/>
</dbReference>
<dbReference type="GO" id="GO:0071051">
    <property type="term" value="P:poly(A)-dependent snoRNA 3'-end processing"/>
    <property type="evidence" value="ECO:0000318"/>
    <property type="project" value="GO_Central"/>
</dbReference>
<dbReference type="GO" id="GO:0006401">
    <property type="term" value="P:RNA catabolic process"/>
    <property type="evidence" value="ECO:0007669"/>
    <property type="project" value="UniProtKB-UniRule"/>
</dbReference>
<dbReference type="GO" id="GO:0034475">
    <property type="term" value="P:U4 snRNA 3'-end processing"/>
    <property type="evidence" value="ECO:0000318"/>
    <property type="project" value="GO_Central"/>
</dbReference>
<dbReference type="CDD" id="cd22524">
    <property type="entry name" value="KH-I_Rrp4_prokar"/>
    <property type="match status" value="1"/>
</dbReference>
<dbReference type="CDD" id="cd05789">
    <property type="entry name" value="S1_Rrp4"/>
    <property type="match status" value="1"/>
</dbReference>
<dbReference type="FunFam" id="2.40.50.100:FF:000082">
    <property type="entry name" value="Exosome complex component Rrp4"/>
    <property type="match status" value="1"/>
</dbReference>
<dbReference type="FunFam" id="2.40.50.140:FF:000127">
    <property type="entry name" value="Exosome complex component RRP40"/>
    <property type="match status" value="1"/>
</dbReference>
<dbReference type="Gene3D" id="2.40.50.100">
    <property type="match status" value="1"/>
</dbReference>
<dbReference type="Gene3D" id="3.30.1370.10">
    <property type="entry name" value="K Homology domain, type 1"/>
    <property type="match status" value="1"/>
</dbReference>
<dbReference type="Gene3D" id="2.40.50.140">
    <property type="entry name" value="Nucleic acid-binding proteins"/>
    <property type="match status" value="1"/>
</dbReference>
<dbReference type="HAMAP" id="MF_00623">
    <property type="entry name" value="Exosome_Rrp4"/>
    <property type="match status" value="1"/>
</dbReference>
<dbReference type="InterPro" id="IPR026699">
    <property type="entry name" value="Exosome_RNA_bind1/RRP40/RRP4"/>
</dbReference>
<dbReference type="InterPro" id="IPR004087">
    <property type="entry name" value="KH_dom"/>
</dbReference>
<dbReference type="InterPro" id="IPR004088">
    <property type="entry name" value="KH_dom_type_1"/>
</dbReference>
<dbReference type="InterPro" id="IPR036612">
    <property type="entry name" value="KH_dom_type_1_sf"/>
</dbReference>
<dbReference type="InterPro" id="IPR012340">
    <property type="entry name" value="NA-bd_OB-fold"/>
</dbReference>
<dbReference type="InterPro" id="IPR023474">
    <property type="entry name" value="Rrp4"/>
</dbReference>
<dbReference type="InterPro" id="IPR054371">
    <property type="entry name" value="RRP4_N"/>
</dbReference>
<dbReference type="InterPro" id="IPR048565">
    <property type="entry name" value="RRP4_S1"/>
</dbReference>
<dbReference type="InterPro" id="IPR003029">
    <property type="entry name" value="S1_domain"/>
</dbReference>
<dbReference type="NCBIfam" id="NF003181">
    <property type="entry name" value="PRK04163.1-1"/>
    <property type="match status" value="1"/>
</dbReference>
<dbReference type="PANTHER" id="PTHR21321:SF4">
    <property type="entry name" value="EXOSOME COMPLEX COMPONENT RRP4"/>
    <property type="match status" value="1"/>
</dbReference>
<dbReference type="PANTHER" id="PTHR21321">
    <property type="entry name" value="PNAS-3 RELATED"/>
    <property type="match status" value="1"/>
</dbReference>
<dbReference type="Pfam" id="PF22625">
    <property type="entry name" value="ECR1_N_2"/>
    <property type="match status" value="1"/>
</dbReference>
<dbReference type="Pfam" id="PF15985">
    <property type="entry name" value="KH_6"/>
    <property type="match status" value="1"/>
</dbReference>
<dbReference type="Pfam" id="PF21266">
    <property type="entry name" value="RRP4_S1"/>
    <property type="match status" value="1"/>
</dbReference>
<dbReference type="SMART" id="SM00322">
    <property type="entry name" value="KH"/>
    <property type="match status" value="1"/>
</dbReference>
<dbReference type="SMART" id="SM00316">
    <property type="entry name" value="S1"/>
    <property type="match status" value="1"/>
</dbReference>
<dbReference type="SUPFAM" id="SSF54791">
    <property type="entry name" value="Eukaryotic type KH-domain (KH-domain type I)"/>
    <property type="match status" value="1"/>
</dbReference>
<dbReference type="SUPFAM" id="SSF50249">
    <property type="entry name" value="Nucleic acid-binding proteins"/>
    <property type="match status" value="1"/>
</dbReference>
<dbReference type="SUPFAM" id="SSF110324">
    <property type="entry name" value="Ribosomal L27 protein-like"/>
    <property type="match status" value="1"/>
</dbReference>
<dbReference type="PROSITE" id="PS50084">
    <property type="entry name" value="KH_TYPE_1"/>
    <property type="match status" value="1"/>
</dbReference>
<dbReference type="PROSITE" id="PS50126">
    <property type="entry name" value="S1"/>
    <property type="match status" value="1"/>
</dbReference>
<organism>
    <name type="scientific">Thermococcus kodakarensis (strain ATCC BAA-918 / JCM 12380 / KOD1)</name>
    <name type="common">Pyrococcus kodakaraensis (strain KOD1)</name>
    <dbReference type="NCBI Taxonomy" id="69014"/>
    <lineage>
        <taxon>Archaea</taxon>
        <taxon>Methanobacteriati</taxon>
        <taxon>Methanobacteriota</taxon>
        <taxon>Thermococci</taxon>
        <taxon>Thermococcales</taxon>
        <taxon>Thermococcaceae</taxon>
        <taxon>Thermococcus</taxon>
    </lineage>
</organism>
<proteinExistence type="inferred from homology"/>